<reference key="1">
    <citation type="submission" date="2006-09" db="EMBL/GenBank/DDBJ databases">
        <title>NISC comparative sequencing initiative.</title>
        <authorList>
            <person name="Antonellis A."/>
            <person name="Ayele K."/>
            <person name="Benjamin B."/>
            <person name="Blakesley R.W."/>
            <person name="Boakye A."/>
            <person name="Bouffard G.G."/>
            <person name="Brinkley C."/>
            <person name="Brooks S."/>
            <person name="Chu G."/>
            <person name="Coleman H."/>
            <person name="Engle J."/>
            <person name="Gestole M."/>
            <person name="Greene A."/>
            <person name="Guan X."/>
            <person name="Gupta J."/>
            <person name="Haghighi P."/>
            <person name="Han J."/>
            <person name="Hansen N."/>
            <person name="Ho S.-L."/>
            <person name="Hu P."/>
            <person name="Hunter G."/>
            <person name="Hurle B."/>
            <person name="Idol J.R."/>
            <person name="Kwong P."/>
            <person name="Laric P."/>
            <person name="Larson S."/>
            <person name="Lee-Lin S.-Q."/>
            <person name="Legaspi R."/>
            <person name="Madden M."/>
            <person name="Maduro Q.L."/>
            <person name="Maduro V.B."/>
            <person name="Margulies E.H."/>
            <person name="Masiello C."/>
            <person name="Maskeri B."/>
            <person name="McDowell J."/>
            <person name="Mojidi H.A."/>
            <person name="Mullikin J.C."/>
            <person name="Oestreicher J.S."/>
            <person name="Park M."/>
            <person name="Portnoy M.E."/>
            <person name="Prasad A."/>
            <person name="Puri O."/>
            <person name="Reddix-Dugue N."/>
            <person name="Schandler K."/>
            <person name="Schueler M.G."/>
            <person name="Sison C."/>
            <person name="Stantripop S."/>
            <person name="Stephen E."/>
            <person name="Taye A."/>
            <person name="Thomas J.W."/>
            <person name="Thomas P.J."/>
            <person name="Tsipouri V."/>
            <person name="Ung L."/>
            <person name="Vogt J.L."/>
            <person name="Wetherby K.D."/>
            <person name="Young A."/>
            <person name="Green E.D."/>
        </authorList>
    </citation>
    <scope>NUCLEOTIDE SEQUENCE [LARGE SCALE GENOMIC DNA]</scope>
</reference>
<sequence>MAEAATGFLEQLKSCIVWSWTYLWTVWFFIVLFLVYILRVPLKINDNLSTVSMFLNTLTPKFYVALTGTSSLISGLILIFEWWYFRKYGTSFIEQVSVSHLRPLLGGVDNNSNNSNSSNGDSDSNRQSVSECKVWRNPLNLFRGAEYNRYTWVTGREPLTYYDMNLSAQDHQTFFTCDSDHLRPADAIMQKAWRERNPQARISAAHEALEINEIRSRVEVPLIASSTIWEIKLLPKCATAYILLAEEEATTIAEAEKLFKQALKAGDGCYRRSQQLQHHGSQYEAQHRRDTNVLVYIKRRLAMCARRLGRTREAVKMMRDLMKEFPLLSMFNIHENLLEALLELQAYADVQAVLAKYDDISLPKSATICYTAALLKARAVSDKFSPEAASRRGLSTAEMNAVEAIHRAVEFNPHVPKYLLEMKSLILPPEHILKRGDSEAIAYAFFHLAHWKRVEGALNLLHCTWEGTFRMIPYPLEKGHLFYPYPICTETADRELLPSFHEVSVYPKKELPFFILFTAGLCSFTAMLALLTHQFPELMGVFAKAMIDIFCSAEFRDWNCKSIVMRVEDELEIPPASQSQHFQN</sequence>
<keyword id="KW-0325">Glycoprotein</keyword>
<keyword id="KW-0472">Membrane</keyword>
<keyword id="KW-0597">Phosphoprotein</keyword>
<keyword id="KW-1185">Reference proteome</keyword>
<keyword id="KW-0812">Transmembrane</keyword>
<keyword id="KW-1133">Transmembrane helix</keyword>
<organism>
    <name type="scientific">Cavia porcellus</name>
    <name type="common">Guinea pig</name>
    <dbReference type="NCBI Taxonomy" id="10141"/>
    <lineage>
        <taxon>Eukaryota</taxon>
        <taxon>Metazoa</taxon>
        <taxon>Chordata</taxon>
        <taxon>Craniata</taxon>
        <taxon>Vertebrata</taxon>
        <taxon>Euteleostomi</taxon>
        <taxon>Mammalia</taxon>
        <taxon>Eutheria</taxon>
        <taxon>Euarchontoglires</taxon>
        <taxon>Glires</taxon>
        <taxon>Rodentia</taxon>
        <taxon>Hystricomorpha</taxon>
        <taxon>Caviidae</taxon>
        <taxon>Cavia</taxon>
    </lineage>
</organism>
<comment type="subcellular location">
    <subcellularLocation>
        <location evidence="3">Membrane</location>
        <topology evidence="3">Multi-pass membrane protein</topology>
    </subcellularLocation>
</comment>
<comment type="similarity">
    <text evidence="3">Belongs to the ST7 family.</text>
</comment>
<gene>
    <name type="primary">ST7</name>
</gene>
<evidence type="ECO:0000250" key="1">
    <source>
        <dbReference type="UniProtKB" id="Q9NRC1"/>
    </source>
</evidence>
<evidence type="ECO:0000255" key="2"/>
<evidence type="ECO:0000305" key="3"/>
<dbReference type="EMBL" id="DP000184">
    <property type="protein sequence ID" value="ABI93668.1"/>
    <property type="molecule type" value="Genomic_DNA"/>
</dbReference>
<dbReference type="FunCoup" id="Q07E08">
    <property type="interactions" value="1845"/>
</dbReference>
<dbReference type="GlyCosmos" id="Q07E08">
    <property type="glycosylation" value="1 site, No reported glycans"/>
</dbReference>
<dbReference type="eggNOG" id="KOG3807">
    <property type="taxonomic scope" value="Eukaryota"/>
</dbReference>
<dbReference type="InParanoid" id="Q07E08"/>
<dbReference type="Proteomes" id="UP000005447">
    <property type="component" value="Unassembled WGS sequence"/>
</dbReference>
<dbReference type="GO" id="GO:0016020">
    <property type="term" value="C:membrane"/>
    <property type="evidence" value="ECO:0007669"/>
    <property type="project" value="UniProtKB-SubCell"/>
</dbReference>
<dbReference type="CDD" id="cd11557">
    <property type="entry name" value="ST7"/>
    <property type="match status" value="1"/>
</dbReference>
<dbReference type="InterPro" id="IPR007311">
    <property type="entry name" value="ST7"/>
</dbReference>
<dbReference type="PANTHER" id="PTHR12745">
    <property type="entry name" value="SUPPRESSION OF TUMORIGENICITY 7"/>
    <property type="match status" value="1"/>
</dbReference>
<dbReference type="PANTHER" id="PTHR12745:SF10">
    <property type="entry name" value="SUPPRESSOR OF TUMORIGENICITY 7 PROTEIN"/>
    <property type="match status" value="1"/>
</dbReference>
<dbReference type="Pfam" id="PF04184">
    <property type="entry name" value="ST7"/>
    <property type="match status" value="1"/>
</dbReference>
<feature type="chain" id="PRO_0000339195" description="Suppressor of tumorigenicity 7 protein">
    <location>
        <begin position="1"/>
        <end position="584"/>
    </location>
</feature>
<feature type="transmembrane region" description="Helical" evidence="2">
    <location>
        <begin position="15"/>
        <end position="35"/>
    </location>
</feature>
<feature type="transmembrane region" description="Helical" evidence="2">
    <location>
        <begin position="62"/>
        <end position="82"/>
    </location>
</feature>
<feature type="transmembrane region" description="Helical" evidence="2">
    <location>
        <begin position="511"/>
        <end position="531"/>
    </location>
</feature>
<feature type="modified residue" description="Phosphoserine" evidence="1">
    <location>
        <position position="385"/>
    </location>
</feature>
<feature type="glycosylation site" description="N-linked (GlcNAc...) asparagine" evidence="2">
    <location>
        <position position="47"/>
    </location>
</feature>
<accession>Q07E08</accession>
<protein>
    <recommendedName>
        <fullName>Suppressor of tumorigenicity 7 protein</fullName>
    </recommendedName>
</protein>
<proteinExistence type="inferred from homology"/>
<name>ST7_CAVPO</name>